<name>BZPL_DICDI</name>
<comment type="function">
    <text evidence="1">Probable transcriptional regulator.</text>
</comment>
<comment type="subcellular location">
    <subcellularLocation>
        <location evidence="2">Nucleus</location>
    </subcellularLocation>
</comment>
<comment type="similarity">
    <text evidence="4">Belongs to the bZIP family.</text>
</comment>
<sequence length="530" mass="58397">MYSPSSPQSSEPMSPESDYGGGNSINNSNSSNNSSANQSPQFSVGKMKVDSEEKVKKRQVRLLKNRQSAALSRSRKKEYIANLESKAQELTHSTQELHVQYNKISSTTFETKSRLEFLEKSLRSLRMENEFLRTKFEDINNNNIKSHSRSNSSSSSLSSSPTTPNTTTTTTTSTTPVQLIINNHKSESSPLLLNSTNSSPTIASTLINTKDIINVSQNKNNNNNNNNNNNNNNNNNNNNNNNNNTTNLLDQQQQSPTPVLESLIKKDREREILIGINKINHFKFNNNNINNINNINNNNNNINNIVNDEEDEEKCKINSVEESNSNHLNNNFSNLSFSSPNVNSQPIYLTRVRSSSYHPSNYLGMESPTINAGHHMIIPTESLILSSNHHHHHHNNINNNSNNHYHHESSTASSSSGGNKLPSLYSITNNLGGGNSSSPSSSSTSSPSTSSPSTPKSMGFPSPIFIGSSGSGPSSSGSQINHRSSIIGLSKLKSYNNNNNSNNNNSPILYPISTNQYPSLINNNNNNNNY</sequence>
<feature type="chain" id="PRO_0000384410" description="Probable basic-leucine zipper transcription factor L">
    <location>
        <begin position="1"/>
        <end position="530"/>
    </location>
</feature>
<feature type="domain" description="bZIP" evidence="2">
    <location>
        <begin position="55"/>
        <end position="118"/>
    </location>
</feature>
<feature type="region of interest" description="Disordered" evidence="3">
    <location>
        <begin position="1"/>
        <end position="76"/>
    </location>
</feature>
<feature type="region of interest" description="Basic motif" evidence="2">
    <location>
        <begin position="56"/>
        <end position="77"/>
    </location>
</feature>
<feature type="region of interest" description="Leucine-zipper" evidence="2">
    <location>
        <begin position="83"/>
        <end position="104"/>
    </location>
</feature>
<feature type="region of interest" description="Disordered" evidence="3">
    <location>
        <begin position="142"/>
        <end position="177"/>
    </location>
</feature>
<feature type="region of interest" description="Disordered" evidence="3">
    <location>
        <begin position="216"/>
        <end position="258"/>
    </location>
</feature>
<feature type="region of interest" description="Disordered" evidence="3">
    <location>
        <begin position="389"/>
        <end position="481"/>
    </location>
</feature>
<feature type="compositionally biased region" description="Low complexity" evidence="3">
    <location>
        <begin position="1"/>
        <end position="17"/>
    </location>
</feature>
<feature type="compositionally biased region" description="Low complexity" evidence="3">
    <location>
        <begin position="24"/>
        <end position="39"/>
    </location>
</feature>
<feature type="compositionally biased region" description="Low complexity" evidence="3">
    <location>
        <begin position="149"/>
        <end position="176"/>
    </location>
</feature>
<feature type="compositionally biased region" description="Low complexity" evidence="3">
    <location>
        <begin position="220"/>
        <end position="247"/>
    </location>
</feature>
<feature type="compositionally biased region" description="Polar residues" evidence="3">
    <location>
        <begin position="248"/>
        <end position="257"/>
    </location>
</feature>
<feature type="compositionally biased region" description="Low complexity" evidence="3">
    <location>
        <begin position="436"/>
        <end position="478"/>
    </location>
</feature>
<proteinExistence type="inferred from homology"/>
<gene>
    <name type="primary">bzpL</name>
    <name type="ORF">DDB_G0284023</name>
</gene>
<accession>Q54Q90</accession>
<keyword id="KW-0238">DNA-binding</keyword>
<keyword id="KW-0539">Nucleus</keyword>
<keyword id="KW-1185">Reference proteome</keyword>
<keyword id="KW-0804">Transcription</keyword>
<keyword id="KW-0805">Transcription regulation</keyword>
<organism>
    <name type="scientific">Dictyostelium discoideum</name>
    <name type="common">Social amoeba</name>
    <dbReference type="NCBI Taxonomy" id="44689"/>
    <lineage>
        <taxon>Eukaryota</taxon>
        <taxon>Amoebozoa</taxon>
        <taxon>Evosea</taxon>
        <taxon>Eumycetozoa</taxon>
        <taxon>Dictyostelia</taxon>
        <taxon>Dictyosteliales</taxon>
        <taxon>Dictyosteliaceae</taxon>
        <taxon>Dictyostelium</taxon>
    </lineage>
</organism>
<reference key="1">
    <citation type="journal article" date="2005" name="Nature">
        <title>The genome of the social amoeba Dictyostelium discoideum.</title>
        <authorList>
            <person name="Eichinger L."/>
            <person name="Pachebat J.A."/>
            <person name="Gloeckner G."/>
            <person name="Rajandream M.A."/>
            <person name="Sucgang R."/>
            <person name="Berriman M."/>
            <person name="Song J."/>
            <person name="Olsen R."/>
            <person name="Szafranski K."/>
            <person name="Xu Q."/>
            <person name="Tunggal B."/>
            <person name="Kummerfeld S."/>
            <person name="Madera M."/>
            <person name="Konfortov B.A."/>
            <person name="Rivero F."/>
            <person name="Bankier A.T."/>
            <person name="Lehmann R."/>
            <person name="Hamlin N."/>
            <person name="Davies R."/>
            <person name="Gaudet P."/>
            <person name="Fey P."/>
            <person name="Pilcher K."/>
            <person name="Chen G."/>
            <person name="Saunders D."/>
            <person name="Sodergren E.J."/>
            <person name="Davis P."/>
            <person name="Kerhornou A."/>
            <person name="Nie X."/>
            <person name="Hall N."/>
            <person name="Anjard C."/>
            <person name="Hemphill L."/>
            <person name="Bason N."/>
            <person name="Farbrother P."/>
            <person name="Desany B."/>
            <person name="Just E."/>
            <person name="Morio T."/>
            <person name="Rost R."/>
            <person name="Churcher C.M."/>
            <person name="Cooper J."/>
            <person name="Haydock S."/>
            <person name="van Driessche N."/>
            <person name="Cronin A."/>
            <person name="Goodhead I."/>
            <person name="Muzny D.M."/>
            <person name="Mourier T."/>
            <person name="Pain A."/>
            <person name="Lu M."/>
            <person name="Harper D."/>
            <person name="Lindsay R."/>
            <person name="Hauser H."/>
            <person name="James K.D."/>
            <person name="Quiles M."/>
            <person name="Madan Babu M."/>
            <person name="Saito T."/>
            <person name="Buchrieser C."/>
            <person name="Wardroper A."/>
            <person name="Felder M."/>
            <person name="Thangavelu M."/>
            <person name="Johnson D."/>
            <person name="Knights A."/>
            <person name="Loulseged H."/>
            <person name="Mungall K.L."/>
            <person name="Oliver K."/>
            <person name="Price C."/>
            <person name="Quail M.A."/>
            <person name="Urushihara H."/>
            <person name="Hernandez J."/>
            <person name="Rabbinowitsch E."/>
            <person name="Steffen D."/>
            <person name="Sanders M."/>
            <person name="Ma J."/>
            <person name="Kohara Y."/>
            <person name="Sharp S."/>
            <person name="Simmonds M.N."/>
            <person name="Spiegler S."/>
            <person name="Tivey A."/>
            <person name="Sugano S."/>
            <person name="White B."/>
            <person name="Walker D."/>
            <person name="Woodward J.R."/>
            <person name="Winckler T."/>
            <person name="Tanaka Y."/>
            <person name="Shaulsky G."/>
            <person name="Schleicher M."/>
            <person name="Weinstock G.M."/>
            <person name="Rosenthal A."/>
            <person name="Cox E.C."/>
            <person name="Chisholm R.L."/>
            <person name="Gibbs R.A."/>
            <person name="Loomis W.F."/>
            <person name="Platzer M."/>
            <person name="Kay R.R."/>
            <person name="Williams J.G."/>
            <person name="Dear P.H."/>
            <person name="Noegel A.A."/>
            <person name="Barrell B.G."/>
            <person name="Kuspa A."/>
        </authorList>
    </citation>
    <scope>NUCLEOTIDE SEQUENCE [LARGE SCALE GENOMIC DNA]</scope>
    <source>
        <strain>AX4</strain>
    </source>
</reference>
<reference key="2">
    <citation type="journal article" date="2006" name="Development">
        <title>bZIP transcription factor interactions regulate DIF responses in Dictyostelium.</title>
        <authorList>
            <person name="Huang E."/>
            <person name="Blagg S.L."/>
            <person name="Keller T."/>
            <person name="Katoh M."/>
            <person name="Shaulsky G."/>
            <person name="Thompson C.R.L."/>
        </authorList>
    </citation>
    <scope>IDENTIFICATION</scope>
</reference>
<dbReference type="EMBL" id="AAFI02000059">
    <property type="protein sequence ID" value="EAL65435.1"/>
    <property type="molecule type" value="Genomic_DNA"/>
</dbReference>
<dbReference type="RefSeq" id="XP_638790.1">
    <property type="nucleotide sequence ID" value="XM_633698.1"/>
</dbReference>
<dbReference type="SMR" id="Q54Q90"/>
<dbReference type="FunCoup" id="Q54Q90">
    <property type="interactions" value="480"/>
</dbReference>
<dbReference type="STRING" id="44689.Q54Q90"/>
<dbReference type="PaxDb" id="44689-DDB0216259"/>
<dbReference type="EnsemblProtists" id="EAL65435">
    <property type="protein sequence ID" value="EAL65435"/>
    <property type="gene ID" value="DDB_G0284023"/>
</dbReference>
<dbReference type="GeneID" id="8624379"/>
<dbReference type="KEGG" id="ddi:DDB_G0284023"/>
<dbReference type="dictyBase" id="DDB_G0284023">
    <property type="gene designation" value="bzpL"/>
</dbReference>
<dbReference type="VEuPathDB" id="AmoebaDB:DDB_G0284023"/>
<dbReference type="eggNOG" id="ENOG502RHD8">
    <property type="taxonomic scope" value="Eukaryota"/>
</dbReference>
<dbReference type="HOGENOM" id="CLU_514309_0_0_1"/>
<dbReference type="InParanoid" id="Q54Q90"/>
<dbReference type="OMA" id="THELRQS"/>
<dbReference type="Reactome" id="R-DDI-381033">
    <property type="pathway name" value="ATF6 (ATF6-alpha) activates chaperones"/>
</dbReference>
<dbReference type="Reactome" id="R-DDI-8874177">
    <property type="pathway name" value="ATF6B (ATF6-beta) activates chaperones"/>
</dbReference>
<dbReference type="Reactome" id="R-DDI-9909505">
    <property type="pathway name" value="Modulation of host responses by IFN-stimulated genes"/>
</dbReference>
<dbReference type="PRO" id="PR:Q54Q90"/>
<dbReference type="Proteomes" id="UP000002195">
    <property type="component" value="Chromosome 4"/>
</dbReference>
<dbReference type="GO" id="GO:0005634">
    <property type="term" value="C:nucleus"/>
    <property type="evidence" value="ECO:0000318"/>
    <property type="project" value="GO_Central"/>
</dbReference>
<dbReference type="GO" id="GO:0000981">
    <property type="term" value="F:DNA-binding transcription factor activity, RNA polymerase II-specific"/>
    <property type="evidence" value="ECO:0000318"/>
    <property type="project" value="GO_Central"/>
</dbReference>
<dbReference type="GO" id="GO:0000978">
    <property type="term" value="F:RNA polymerase II cis-regulatory region sequence-specific DNA binding"/>
    <property type="evidence" value="ECO:0000318"/>
    <property type="project" value="GO_Central"/>
</dbReference>
<dbReference type="GO" id="GO:0030968">
    <property type="term" value="P:endoplasmic reticulum unfolded protein response"/>
    <property type="evidence" value="ECO:0000318"/>
    <property type="project" value="GO_Central"/>
</dbReference>
<dbReference type="GO" id="GO:0006357">
    <property type="term" value="P:regulation of transcription by RNA polymerase II"/>
    <property type="evidence" value="ECO:0000318"/>
    <property type="project" value="GO_Central"/>
</dbReference>
<dbReference type="CDD" id="cd14704">
    <property type="entry name" value="bZIP_HY5-like"/>
    <property type="match status" value="1"/>
</dbReference>
<dbReference type="Gene3D" id="1.20.5.170">
    <property type="match status" value="1"/>
</dbReference>
<dbReference type="InterPro" id="IPR051882">
    <property type="entry name" value="ATF_bZIP_TF"/>
</dbReference>
<dbReference type="InterPro" id="IPR004827">
    <property type="entry name" value="bZIP"/>
</dbReference>
<dbReference type="InterPro" id="IPR046347">
    <property type="entry name" value="bZIP_sf"/>
</dbReference>
<dbReference type="PANTHER" id="PTHR46164">
    <property type="entry name" value="ATF6, ISOFORM C"/>
    <property type="match status" value="1"/>
</dbReference>
<dbReference type="PANTHER" id="PTHR46164:SF3">
    <property type="entry name" value="ATF6, ISOFORM C"/>
    <property type="match status" value="1"/>
</dbReference>
<dbReference type="Pfam" id="PF00170">
    <property type="entry name" value="bZIP_1"/>
    <property type="match status" value="1"/>
</dbReference>
<dbReference type="SMART" id="SM00338">
    <property type="entry name" value="BRLZ"/>
    <property type="match status" value="1"/>
</dbReference>
<dbReference type="SUPFAM" id="SSF57959">
    <property type="entry name" value="Leucine zipper domain"/>
    <property type="match status" value="1"/>
</dbReference>
<dbReference type="PROSITE" id="PS50217">
    <property type="entry name" value="BZIP"/>
    <property type="match status" value="1"/>
</dbReference>
<protein>
    <recommendedName>
        <fullName>Probable basic-leucine zipper transcription factor L</fullName>
    </recommendedName>
</protein>
<evidence type="ECO:0000250" key="1"/>
<evidence type="ECO:0000255" key="2">
    <source>
        <dbReference type="PROSITE-ProRule" id="PRU00978"/>
    </source>
</evidence>
<evidence type="ECO:0000256" key="3">
    <source>
        <dbReference type="SAM" id="MobiDB-lite"/>
    </source>
</evidence>
<evidence type="ECO:0000305" key="4"/>